<accession>P85410</accession>
<dbReference type="GO" id="GO:0009279">
    <property type="term" value="C:cell outer membrane"/>
    <property type="evidence" value="ECO:0007669"/>
    <property type="project" value="UniProtKB-SubCell"/>
</dbReference>
<dbReference type="GO" id="GO:0046930">
    <property type="term" value="C:pore complex"/>
    <property type="evidence" value="ECO:0007669"/>
    <property type="project" value="UniProtKB-KW"/>
</dbReference>
<dbReference type="GO" id="GO:0015288">
    <property type="term" value="F:porin activity"/>
    <property type="evidence" value="ECO:0007669"/>
    <property type="project" value="UniProtKB-KW"/>
</dbReference>
<dbReference type="GO" id="GO:0006811">
    <property type="term" value="P:monoatomic ion transport"/>
    <property type="evidence" value="ECO:0007669"/>
    <property type="project" value="UniProtKB-KW"/>
</dbReference>
<gene>
    <name evidence="5" type="primary">ompA</name>
</gene>
<organism>
    <name type="scientific">Glaesserella parasuis</name>
    <name type="common">Haemophilus parasuis</name>
    <dbReference type="NCBI Taxonomy" id="738"/>
    <lineage>
        <taxon>Bacteria</taxon>
        <taxon>Pseudomonadati</taxon>
        <taxon>Pseudomonadota</taxon>
        <taxon>Gammaproteobacteria</taxon>
        <taxon>Pasteurellales</taxon>
        <taxon>Pasteurellaceae</taxon>
        <taxon>Glaesserella</taxon>
    </lineage>
</organism>
<protein>
    <recommendedName>
        <fullName evidence="4">Outer membrane protein P5</fullName>
        <shortName>OMP P5</shortName>
    </recommendedName>
    <alternativeName>
        <fullName>Outer membrane protein A</fullName>
    </alternativeName>
</protein>
<keyword id="KW-0998">Cell outer membrane</keyword>
<keyword id="KW-0903">Direct protein sequencing</keyword>
<keyword id="KW-0406">Ion transport</keyword>
<keyword id="KW-0472">Membrane</keyword>
<keyword id="KW-0626">Porin</keyword>
<keyword id="KW-0812">Transmembrane</keyword>
<keyword id="KW-1134">Transmembrane beta strand</keyword>
<keyword id="KW-0813">Transport</keyword>
<name>OMP5_GLAPU</name>
<comment type="function">
    <text evidence="2">Does not bind carcinoembryonic antigen (CEA).</text>
</comment>
<comment type="function">
    <text evidence="1">With TolR probably plays a role in maintaining the position of the peptidoglycan cell wall in the periplasm. Acts as a porin with low permeability that allows slow penetration of small solutes; an internal gate slows down solute passage.</text>
</comment>
<comment type="subunit">
    <text evidence="1">Monomer and homodimer.</text>
</comment>
<comment type="subcellular location">
    <subcellularLocation>
        <location evidence="1 5">Cell outer membrane</location>
        <topology evidence="1 5">Multi-pass membrane protein</topology>
    </subcellularLocation>
</comment>
<comment type="domain">
    <text evidence="1">The extracellular loops are most variable in sequence, and in some bacteria confer sensitivity to phage and/or colicins.</text>
</comment>
<comment type="miscellaneous">
    <text evidence="2">On a 2D-gel the determined pI of this protein is: 5.5, its MW is: 32 kDa.</text>
</comment>
<comment type="similarity">
    <text evidence="5">Belongs to the outer membrane OOP (TC 1.B.6) superfamily. OmpA family.</text>
</comment>
<feature type="chain" id="PRO_0000317225" description="Outer membrane protein P5">
    <location>
        <begin position="1"/>
        <end position="15" status="greater than"/>
    </location>
</feature>
<feature type="transmembrane region" description="Beta stranded" evidence="1">
    <location>
        <begin position="6"/>
        <end position="15" status="greater than"/>
    </location>
</feature>
<feature type="non-terminal residue" evidence="4">
    <location>
        <position position="15"/>
    </location>
</feature>
<evidence type="ECO:0000250" key="1">
    <source>
        <dbReference type="UniProtKB" id="P0A910"/>
    </source>
</evidence>
<evidence type="ECO:0000269" key="2">
    <source>
    </source>
</evidence>
<evidence type="ECO:0000269" key="3">
    <source ref="1"/>
</evidence>
<evidence type="ECO:0000303" key="4">
    <source ref="1"/>
</evidence>
<evidence type="ECO:0000305" key="5"/>
<sequence length="15" mass="1496">APQANSFYVGAKAGD</sequence>
<proteinExistence type="evidence at protein level"/>
<reference evidence="5" key="1">
    <citation type="thesis" date="2004" institute="Iowa State University" country="United States">
        <title>The identification and characterization of P5 and P2 colonization proteins in Haemophilus parasuis and the targeted binding of carcinoembryonic antigen (CEA).</title>
        <authorList>
            <person name="McVicker J.K."/>
        </authorList>
    </citation>
    <scope>PROTEIN SEQUENCE</scope>
    <source>
        <strain evidence="3">SW114</strain>
        <strain evidence="3">SW140</strain>
    </source>
</reference>
<reference evidence="5" key="2">
    <citation type="journal article" date="2006" name="Prep. Biochem. Biotechnol.">
        <title>Isolation and characterization of the P5 adhesin protein of Haemophilus parasuis serotype 5.</title>
        <authorList>
            <person name="McVicker J.K."/>
            <person name="Tabatabai L.B."/>
        </authorList>
    </citation>
    <scope>PROTEIN SEQUENCE OF 1-10</scope>
    <source>
        <strain evidence="2">IA84-297755</strain>
    </source>
</reference>